<sequence>MMANDAKPDVKTVQVLRDTANRLRIHSIRATCASGSGQLTSCCSAAEVVSVLFFHTMKYKQTDPEHPDNDRFILSRGHAAPILYAAWVEVGDISESDLLNLRKLHSDLERHPTPRLPFVDVATGSLGQGLGTACGMAYTGKYLDKASYRVFCLMGDGESSEGSVWEAFAFASHYNLDNLVAVFDVNRLGQSGPAPLEHGADIYQNCCEAFGWNTYLVDGHDVEALCQAFWQASQVKNKPTAIVAKTFKGRGIPNIEDAENWHGKPVPKERADAIVKLIESQIQTNENLIPKSPVEDSPQISITDIKMTSPPAYKVGDKIATQKTYGLALAKLGRANERVIVLSGDTMNSTFSEIFRKEHPERFIECIIAEQNMVSVALGCATRGRTIAFAGAFAAFFTRAFDQLRMGAISQANINLIGSHCGVSTGEDGVSQMALEDLAMFRSIPNCTVFYPSDAISTEHAIYLAANTKGMCFIRTSQPETAVIYTPQENFEIGQAKVVRHGVNDKVTVIGAGVTLHEALEAADHLSQQGISVRVIDPFTIKPLDAATIISSAKATGGRVITVEDHYREGGIGEAVCAAVSREPDILVHQLAVSGVPQRGKTSELLDMFGISTRHIIAAVTLTLMK</sequence>
<protein>
    <recommendedName>
        <fullName>Transketolase-like protein 2</fullName>
        <ecNumber>2.2.1.1</ecNumber>
    </recommendedName>
</protein>
<dbReference type="EC" id="2.2.1.1"/>
<dbReference type="EMBL" id="AL136779">
    <property type="protein sequence ID" value="CAB66713.1"/>
    <property type="molecule type" value="mRNA"/>
</dbReference>
<dbReference type="EMBL" id="AK057325">
    <property type="protein sequence ID" value="BAB71427.1"/>
    <property type="molecule type" value="mRNA"/>
</dbReference>
<dbReference type="EMBL" id="CR533560">
    <property type="protein sequence ID" value="CAG38591.1"/>
    <property type="molecule type" value="mRNA"/>
</dbReference>
<dbReference type="EMBL" id="BC028707">
    <property type="protein sequence ID" value="AAH28707.4"/>
    <property type="molecule type" value="mRNA"/>
</dbReference>
<dbReference type="EMBL" id="BC125101">
    <property type="protein sequence ID" value="AAI25102.1"/>
    <property type="molecule type" value="mRNA"/>
</dbReference>
<dbReference type="EMBL" id="BC142943">
    <property type="protein sequence ID" value="AAI42944.1"/>
    <property type="molecule type" value="mRNA"/>
</dbReference>
<dbReference type="CCDS" id="CCDS3805.1"/>
<dbReference type="RefSeq" id="NP_115512.3">
    <property type="nucleotide sequence ID" value="NM_032136.4"/>
</dbReference>
<dbReference type="SMR" id="Q9H0I9"/>
<dbReference type="BioGRID" id="123871">
    <property type="interactions" value="19"/>
</dbReference>
<dbReference type="FunCoup" id="Q9H0I9">
    <property type="interactions" value="511"/>
</dbReference>
<dbReference type="IntAct" id="Q9H0I9">
    <property type="interactions" value="8"/>
</dbReference>
<dbReference type="STRING" id="9606.ENSP00000280605"/>
<dbReference type="iPTMnet" id="Q9H0I9"/>
<dbReference type="PhosphoSitePlus" id="Q9H0I9"/>
<dbReference type="BioMuta" id="TKTL2"/>
<dbReference type="DMDM" id="74717985"/>
<dbReference type="jPOST" id="Q9H0I9"/>
<dbReference type="MassIVE" id="Q9H0I9"/>
<dbReference type="PaxDb" id="9606-ENSP00000280605"/>
<dbReference type="PeptideAtlas" id="Q9H0I9"/>
<dbReference type="ProteomicsDB" id="80285"/>
<dbReference type="Antibodypedia" id="28268">
    <property type="antibodies" value="132 antibodies from 19 providers"/>
</dbReference>
<dbReference type="DNASU" id="84076"/>
<dbReference type="Ensembl" id="ENST00000280605.5">
    <property type="protein sequence ID" value="ENSP00000280605.3"/>
    <property type="gene ID" value="ENSG00000151005.5"/>
</dbReference>
<dbReference type="GeneID" id="84076"/>
<dbReference type="KEGG" id="hsa:84076"/>
<dbReference type="MANE-Select" id="ENST00000280605.5">
    <property type="protein sequence ID" value="ENSP00000280605.3"/>
    <property type="RefSeq nucleotide sequence ID" value="NM_032136.5"/>
    <property type="RefSeq protein sequence ID" value="NP_115512.3"/>
</dbReference>
<dbReference type="UCSC" id="uc003iqp.5">
    <property type="organism name" value="human"/>
</dbReference>
<dbReference type="AGR" id="HGNC:25313"/>
<dbReference type="CTD" id="84076"/>
<dbReference type="DisGeNET" id="84076"/>
<dbReference type="GeneCards" id="TKTL2"/>
<dbReference type="HGNC" id="HGNC:25313">
    <property type="gene designation" value="TKTL2"/>
</dbReference>
<dbReference type="HPA" id="ENSG00000151005">
    <property type="expression patterns" value="Tissue enriched (testis)"/>
</dbReference>
<dbReference type="neXtProt" id="NX_Q9H0I9"/>
<dbReference type="OpenTargets" id="ENSG00000151005"/>
<dbReference type="PharmGKB" id="PA142670806"/>
<dbReference type="VEuPathDB" id="HostDB:ENSG00000151005"/>
<dbReference type="eggNOG" id="KOG0523">
    <property type="taxonomic scope" value="Eukaryota"/>
</dbReference>
<dbReference type="GeneTree" id="ENSGT00940000161969"/>
<dbReference type="HOGENOM" id="CLU_009227_3_0_1"/>
<dbReference type="InParanoid" id="Q9H0I9"/>
<dbReference type="OMA" id="VRVIHVM"/>
<dbReference type="OrthoDB" id="10267175at2759"/>
<dbReference type="PAN-GO" id="Q9H0I9">
    <property type="GO annotations" value="2 GO annotations based on evolutionary models"/>
</dbReference>
<dbReference type="PhylomeDB" id="Q9H0I9"/>
<dbReference type="TreeFam" id="TF313097"/>
<dbReference type="BRENDA" id="2.2.1.1">
    <property type="organism ID" value="2681"/>
</dbReference>
<dbReference type="PathwayCommons" id="Q9H0I9"/>
<dbReference type="SignaLink" id="Q9H0I9"/>
<dbReference type="BioGRID-ORCS" id="84076">
    <property type="hits" value="7 hits in 1143 CRISPR screens"/>
</dbReference>
<dbReference type="GeneWiki" id="TKTL2"/>
<dbReference type="GenomeRNAi" id="84076"/>
<dbReference type="Pharos" id="Q9H0I9">
    <property type="development level" value="Tbio"/>
</dbReference>
<dbReference type="PRO" id="PR:Q9H0I9"/>
<dbReference type="Proteomes" id="UP000005640">
    <property type="component" value="Chromosome 4"/>
</dbReference>
<dbReference type="RNAct" id="Q9H0I9">
    <property type="molecule type" value="protein"/>
</dbReference>
<dbReference type="Bgee" id="ENSG00000151005">
    <property type="expression patterns" value="Expressed in adult organism and 25 other cell types or tissues"/>
</dbReference>
<dbReference type="ExpressionAtlas" id="Q9H0I9">
    <property type="expression patterns" value="baseline and differential"/>
</dbReference>
<dbReference type="GO" id="GO:0005737">
    <property type="term" value="C:cytoplasm"/>
    <property type="evidence" value="ECO:0000314"/>
    <property type="project" value="LIFEdb"/>
</dbReference>
<dbReference type="GO" id="GO:0046872">
    <property type="term" value="F:metal ion binding"/>
    <property type="evidence" value="ECO:0007669"/>
    <property type="project" value="UniProtKB-KW"/>
</dbReference>
<dbReference type="GO" id="GO:0030976">
    <property type="term" value="F:thiamine pyrophosphate binding"/>
    <property type="evidence" value="ECO:0000318"/>
    <property type="project" value="GO_Central"/>
</dbReference>
<dbReference type="GO" id="GO:0004802">
    <property type="term" value="F:transketolase activity"/>
    <property type="evidence" value="ECO:0000318"/>
    <property type="project" value="GO_Central"/>
</dbReference>
<dbReference type="CDD" id="cd07033">
    <property type="entry name" value="TPP_PYR_DXS_TK_like"/>
    <property type="match status" value="1"/>
</dbReference>
<dbReference type="CDD" id="cd02012">
    <property type="entry name" value="TPP_TK"/>
    <property type="match status" value="1"/>
</dbReference>
<dbReference type="FunFam" id="3.40.50.970:FF:000028">
    <property type="entry name" value="Transketolase isoform 1"/>
    <property type="match status" value="1"/>
</dbReference>
<dbReference type="FunFam" id="3.40.50.970:FF:000033">
    <property type="entry name" value="Transketolase isoform 1"/>
    <property type="match status" value="1"/>
</dbReference>
<dbReference type="FunFam" id="3.40.50.920:FF:000008">
    <property type="entry name" value="transketolase isoform X2"/>
    <property type="match status" value="1"/>
</dbReference>
<dbReference type="Gene3D" id="3.40.50.920">
    <property type="match status" value="1"/>
</dbReference>
<dbReference type="Gene3D" id="3.40.50.970">
    <property type="match status" value="2"/>
</dbReference>
<dbReference type="InterPro" id="IPR029061">
    <property type="entry name" value="THDP-binding"/>
</dbReference>
<dbReference type="InterPro" id="IPR009014">
    <property type="entry name" value="Transketo_C/PFOR_II"/>
</dbReference>
<dbReference type="InterPro" id="IPR051424">
    <property type="entry name" value="Transketolase-like"/>
</dbReference>
<dbReference type="InterPro" id="IPR005475">
    <property type="entry name" value="Transketolase-like_Pyr-bd"/>
</dbReference>
<dbReference type="InterPro" id="IPR033248">
    <property type="entry name" value="Transketolase_C"/>
</dbReference>
<dbReference type="InterPro" id="IPR005474">
    <property type="entry name" value="Transketolase_N"/>
</dbReference>
<dbReference type="NCBIfam" id="NF004559">
    <property type="entry name" value="PRK05899.2-5"/>
    <property type="match status" value="1"/>
</dbReference>
<dbReference type="PANTHER" id="PTHR43195">
    <property type="entry name" value="TRANSKETOLASE"/>
    <property type="match status" value="1"/>
</dbReference>
<dbReference type="PANTHER" id="PTHR43195:SF4">
    <property type="entry name" value="TRANSKETOLASE-LIKE PROTEIN 2"/>
    <property type="match status" value="1"/>
</dbReference>
<dbReference type="Pfam" id="PF02779">
    <property type="entry name" value="Transket_pyr"/>
    <property type="match status" value="1"/>
</dbReference>
<dbReference type="Pfam" id="PF02780">
    <property type="entry name" value="Transketolase_C"/>
    <property type="match status" value="1"/>
</dbReference>
<dbReference type="Pfam" id="PF00456">
    <property type="entry name" value="Transketolase_N"/>
    <property type="match status" value="1"/>
</dbReference>
<dbReference type="SMART" id="SM00861">
    <property type="entry name" value="Transket_pyr"/>
    <property type="match status" value="1"/>
</dbReference>
<dbReference type="SUPFAM" id="SSF52518">
    <property type="entry name" value="Thiamin diphosphate-binding fold (THDP-binding)"/>
    <property type="match status" value="2"/>
</dbReference>
<dbReference type="SUPFAM" id="SSF52922">
    <property type="entry name" value="TK C-terminal domain-like"/>
    <property type="match status" value="1"/>
</dbReference>
<keyword id="KW-0106">Calcium</keyword>
<keyword id="KW-0460">Magnesium</keyword>
<keyword id="KW-0479">Metal-binding</keyword>
<keyword id="KW-1267">Proteomics identification</keyword>
<keyword id="KW-1185">Reference proteome</keyword>
<keyword id="KW-0786">Thiamine pyrophosphate</keyword>
<keyword id="KW-0808">Transferase</keyword>
<feature type="chain" id="PRO_0000285200" description="Transketolase-like protein 2">
    <location>
        <begin position="1"/>
        <end position="626"/>
    </location>
</feature>
<feature type="active site" description="Proton donor" evidence="1">
    <location>
        <position position="370"/>
    </location>
</feature>
<feature type="binding site" evidence="1">
    <location>
        <position position="41"/>
    </location>
    <ligand>
        <name>thiamine diphosphate</name>
        <dbReference type="ChEBI" id="CHEBI:58937"/>
    </ligand>
</feature>
<feature type="binding site" evidence="1">
    <location>
        <position position="78"/>
    </location>
    <ligand>
        <name>thiamine diphosphate</name>
        <dbReference type="ChEBI" id="CHEBI:58937"/>
    </ligand>
</feature>
<feature type="binding site" evidence="1">
    <location>
        <begin position="124"/>
        <end position="126"/>
    </location>
    <ligand>
        <name>thiamine diphosphate</name>
        <dbReference type="ChEBI" id="CHEBI:58937"/>
    </ligand>
</feature>
<feature type="binding site" evidence="1">
    <location>
        <position position="156"/>
    </location>
    <ligand>
        <name>Mg(2+)</name>
        <dbReference type="ChEBI" id="CHEBI:18420"/>
    </ligand>
</feature>
<feature type="binding site" evidence="1">
    <location>
        <position position="157"/>
    </location>
    <ligand>
        <name>thiamine diphosphate</name>
        <dbReference type="ChEBI" id="CHEBI:58937"/>
    </ligand>
</feature>
<feature type="binding site" evidence="1">
    <location>
        <position position="186"/>
    </location>
    <ligand>
        <name>Mg(2+)</name>
        <dbReference type="ChEBI" id="CHEBI:18420"/>
    </ligand>
</feature>
<feature type="binding site" evidence="1">
    <location>
        <position position="186"/>
    </location>
    <ligand>
        <name>thiamine diphosphate</name>
        <dbReference type="ChEBI" id="CHEBI:58937"/>
    </ligand>
</feature>
<feature type="binding site" evidence="1">
    <location>
        <position position="188"/>
    </location>
    <ligand>
        <name>Mg(2+)</name>
        <dbReference type="ChEBI" id="CHEBI:18420"/>
    </ligand>
</feature>
<feature type="binding site" evidence="1">
    <location>
        <position position="248"/>
    </location>
    <ligand>
        <name>thiamine diphosphate</name>
        <dbReference type="ChEBI" id="CHEBI:58937"/>
    </ligand>
</feature>
<feature type="binding site" evidence="1">
    <location>
        <position position="262"/>
    </location>
    <ligand>
        <name>substrate</name>
    </ligand>
</feature>
<feature type="binding site" evidence="1">
    <location>
        <position position="262"/>
    </location>
    <ligand>
        <name>thiamine diphosphate</name>
        <dbReference type="ChEBI" id="CHEBI:58937"/>
    </ligand>
</feature>
<feature type="binding site" evidence="1">
    <location>
        <position position="349"/>
    </location>
    <ligand>
        <name>substrate</name>
    </ligand>
</feature>
<feature type="binding site" evidence="1">
    <location>
        <position position="370"/>
    </location>
    <ligand>
        <name>thiamine diphosphate</name>
        <dbReference type="ChEBI" id="CHEBI:58937"/>
    </ligand>
</feature>
<feature type="binding site" evidence="1">
    <location>
        <position position="396"/>
    </location>
    <ligand>
        <name>thiamine diphosphate</name>
        <dbReference type="ChEBI" id="CHEBI:58937"/>
    </ligand>
</feature>
<feature type="binding site" evidence="1">
    <location>
        <position position="420"/>
    </location>
    <ligand>
        <name>substrate</name>
    </ligand>
</feature>
<feature type="binding site" evidence="1">
    <location>
        <position position="428"/>
    </location>
    <ligand>
        <name>substrate</name>
    </ligand>
</feature>
<feature type="binding site" evidence="1">
    <location>
        <position position="432"/>
    </location>
    <ligand>
        <name>thiamine diphosphate</name>
        <dbReference type="ChEBI" id="CHEBI:58937"/>
    </ligand>
</feature>
<feature type="site" description="Important for catalytic activity" evidence="1">
    <location>
        <position position="262"/>
    </location>
</feature>
<feature type="sequence variant" id="VAR_031990" description="In dbSNP:rs3811750.">
    <original>R</original>
    <variation>Q</variation>
    <location>
        <position position="442"/>
    </location>
</feature>
<feature type="sequence variant" id="VAR_031991" description="In dbSNP:rs11735477." evidence="2">
    <original>Q</original>
    <variation>H</variation>
    <location>
        <position position="590"/>
    </location>
</feature>
<feature type="sequence conflict" description="In Ref. 2; BAB71427." evidence="4" ref="2">
    <original>F</original>
    <variation>L</variation>
    <location>
        <position position="54"/>
    </location>
</feature>
<feature type="sequence conflict" description="In Ref. 4; AAH28707." evidence="4" ref="4">
    <original>I</original>
    <variation>V</variation>
    <location>
        <position position="302"/>
    </location>
</feature>
<feature type="sequence conflict" description="In Ref. 4; AAH28707." evidence="4" ref="4">
    <original>P</original>
    <variation>H</variation>
    <location>
        <position position="311"/>
    </location>
</feature>
<feature type="sequence conflict" description="In Ref. 2; BAB71427." evidence="4" ref="2">
    <original>M</original>
    <variation>I</variation>
    <location>
        <position position="406"/>
    </location>
</feature>
<reference key="1">
    <citation type="journal article" date="2001" name="Genome Res.">
        <title>Towards a catalog of human genes and proteins: sequencing and analysis of 500 novel complete protein coding human cDNAs.</title>
        <authorList>
            <person name="Wiemann S."/>
            <person name="Weil B."/>
            <person name="Wellenreuther R."/>
            <person name="Gassenhuber J."/>
            <person name="Glassl S."/>
            <person name="Ansorge W."/>
            <person name="Boecher M."/>
            <person name="Bloecker H."/>
            <person name="Bauersachs S."/>
            <person name="Blum H."/>
            <person name="Lauber J."/>
            <person name="Duesterhoeft A."/>
            <person name="Beyer A."/>
            <person name="Koehrer K."/>
            <person name="Strack N."/>
            <person name="Mewes H.-W."/>
            <person name="Ottenwaelder B."/>
            <person name="Obermaier B."/>
            <person name="Tampe J."/>
            <person name="Heubner D."/>
            <person name="Wambutt R."/>
            <person name="Korn B."/>
            <person name="Klein M."/>
            <person name="Poustka A."/>
        </authorList>
    </citation>
    <scope>NUCLEOTIDE SEQUENCE [LARGE SCALE MRNA]</scope>
    <source>
        <tissue>Testis</tissue>
    </source>
</reference>
<reference key="2">
    <citation type="journal article" date="2004" name="Nat. Genet.">
        <title>Complete sequencing and characterization of 21,243 full-length human cDNAs.</title>
        <authorList>
            <person name="Ota T."/>
            <person name="Suzuki Y."/>
            <person name="Nishikawa T."/>
            <person name="Otsuki T."/>
            <person name="Sugiyama T."/>
            <person name="Irie R."/>
            <person name="Wakamatsu A."/>
            <person name="Hayashi K."/>
            <person name="Sato H."/>
            <person name="Nagai K."/>
            <person name="Kimura K."/>
            <person name="Makita H."/>
            <person name="Sekine M."/>
            <person name="Obayashi M."/>
            <person name="Nishi T."/>
            <person name="Shibahara T."/>
            <person name="Tanaka T."/>
            <person name="Ishii S."/>
            <person name="Yamamoto J."/>
            <person name="Saito K."/>
            <person name="Kawai Y."/>
            <person name="Isono Y."/>
            <person name="Nakamura Y."/>
            <person name="Nagahari K."/>
            <person name="Murakami K."/>
            <person name="Yasuda T."/>
            <person name="Iwayanagi T."/>
            <person name="Wagatsuma M."/>
            <person name="Shiratori A."/>
            <person name="Sudo H."/>
            <person name="Hosoiri T."/>
            <person name="Kaku Y."/>
            <person name="Kodaira H."/>
            <person name="Kondo H."/>
            <person name="Sugawara M."/>
            <person name="Takahashi M."/>
            <person name="Kanda K."/>
            <person name="Yokoi T."/>
            <person name="Furuya T."/>
            <person name="Kikkawa E."/>
            <person name="Omura Y."/>
            <person name="Abe K."/>
            <person name="Kamihara K."/>
            <person name="Katsuta N."/>
            <person name="Sato K."/>
            <person name="Tanikawa M."/>
            <person name="Yamazaki M."/>
            <person name="Ninomiya K."/>
            <person name="Ishibashi T."/>
            <person name="Yamashita H."/>
            <person name="Murakawa K."/>
            <person name="Fujimori K."/>
            <person name="Tanai H."/>
            <person name="Kimata M."/>
            <person name="Watanabe M."/>
            <person name="Hiraoka S."/>
            <person name="Chiba Y."/>
            <person name="Ishida S."/>
            <person name="Ono Y."/>
            <person name="Takiguchi S."/>
            <person name="Watanabe S."/>
            <person name="Yosida M."/>
            <person name="Hotuta T."/>
            <person name="Kusano J."/>
            <person name="Kanehori K."/>
            <person name="Takahashi-Fujii A."/>
            <person name="Hara H."/>
            <person name="Tanase T.-O."/>
            <person name="Nomura Y."/>
            <person name="Togiya S."/>
            <person name="Komai F."/>
            <person name="Hara R."/>
            <person name="Takeuchi K."/>
            <person name="Arita M."/>
            <person name="Imose N."/>
            <person name="Musashino K."/>
            <person name="Yuuki H."/>
            <person name="Oshima A."/>
            <person name="Sasaki N."/>
            <person name="Aotsuka S."/>
            <person name="Yoshikawa Y."/>
            <person name="Matsunawa H."/>
            <person name="Ichihara T."/>
            <person name="Shiohata N."/>
            <person name="Sano S."/>
            <person name="Moriya S."/>
            <person name="Momiyama H."/>
            <person name="Satoh N."/>
            <person name="Takami S."/>
            <person name="Terashima Y."/>
            <person name="Suzuki O."/>
            <person name="Nakagawa S."/>
            <person name="Senoh A."/>
            <person name="Mizoguchi H."/>
            <person name="Goto Y."/>
            <person name="Shimizu F."/>
            <person name="Wakebe H."/>
            <person name="Hishigaki H."/>
            <person name="Watanabe T."/>
            <person name="Sugiyama A."/>
            <person name="Takemoto M."/>
            <person name="Kawakami B."/>
            <person name="Yamazaki M."/>
            <person name="Watanabe K."/>
            <person name="Kumagai A."/>
            <person name="Itakura S."/>
            <person name="Fukuzumi Y."/>
            <person name="Fujimori Y."/>
            <person name="Komiyama M."/>
            <person name="Tashiro H."/>
            <person name="Tanigami A."/>
            <person name="Fujiwara T."/>
            <person name="Ono T."/>
            <person name="Yamada K."/>
            <person name="Fujii Y."/>
            <person name="Ozaki K."/>
            <person name="Hirao M."/>
            <person name="Ohmori Y."/>
            <person name="Kawabata A."/>
            <person name="Hikiji T."/>
            <person name="Kobatake N."/>
            <person name="Inagaki H."/>
            <person name="Ikema Y."/>
            <person name="Okamoto S."/>
            <person name="Okitani R."/>
            <person name="Kawakami T."/>
            <person name="Noguchi S."/>
            <person name="Itoh T."/>
            <person name="Shigeta K."/>
            <person name="Senba T."/>
            <person name="Matsumura K."/>
            <person name="Nakajima Y."/>
            <person name="Mizuno T."/>
            <person name="Morinaga M."/>
            <person name="Sasaki M."/>
            <person name="Togashi T."/>
            <person name="Oyama M."/>
            <person name="Hata H."/>
            <person name="Watanabe M."/>
            <person name="Komatsu T."/>
            <person name="Mizushima-Sugano J."/>
            <person name="Satoh T."/>
            <person name="Shirai Y."/>
            <person name="Takahashi Y."/>
            <person name="Nakagawa K."/>
            <person name="Okumura K."/>
            <person name="Nagase T."/>
            <person name="Nomura N."/>
            <person name="Kikuchi H."/>
            <person name="Masuho Y."/>
            <person name="Yamashita R."/>
            <person name="Nakai K."/>
            <person name="Yada T."/>
            <person name="Nakamura Y."/>
            <person name="Ohara O."/>
            <person name="Isogai T."/>
            <person name="Sugano S."/>
        </authorList>
    </citation>
    <scope>NUCLEOTIDE SEQUENCE [LARGE SCALE MRNA]</scope>
    <source>
        <tissue>Testis</tissue>
    </source>
</reference>
<reference key="3">
    <citation type="submission" date="2004-06" db="EMBL/GenBank/DDBJ databases">
        <title>Cloning of human full open reading frames in Gateway(TM) system entry vector (pDONR201).</title>
        <authorList>
            <person name="Ebert L."/>
            <person name="Schick M."/>
            <person name="Neubert P."/>
            <person name="Schatten R."/>
            <person name="Henze S."/>
            <person name="Korn B."/>
        </authorList>
    </citation>
    <scope>NUCLEOTIDE SEQUENCE [LARGE SCALE MRNA]</scope>
</reference>
<reference key="4">
    <citation type="journal article" date="2004" name="Genome Res.">
        <title>The status, quality, and expansion of the NIH full-length cDNA project: the Mammalian Gene Collection (MGC).</title>
        <authorList>
            <consortium name="The MGC Project Team"/>
        </authorList>
    </citation>
    <scope>NUCLEOTIDE SEQUENCE [LARGE SCALE MRNA]</scope>
    <scope>VARIANT HIS-590</scope>
    <source>
        <tissue>Testis</tissue>
    </source>
</reference>
<reference key="5">
    <citation type="journal article" date="2007" name="Cancer Lett.">
        <title>Gene silencing of TKTL1 by RNAi inhibits cell proliferation in human hepatoma cells.</title>
        <authorList>
            <person name="Zhang S."/>
            <person name="Yang J.-H."/>
            <person name="Guo C.-K."/>
            <person name="Cai P.-C."/>
        </authorList>
    </citation>
    <scope>FUNCTION</scope>
    <scope>TISSUE SPECIFICITY</scope>
</reference>
<organism>
    <name type="scientific">Homo sapiens</name>
    <name type="common">Human</name>
    <dbReference type="NCBI Taxonomy" id="9606"/>
    <lineage>
        <taxon>Eukaryota</taxon>
        <taxon>Metazoa</taxon>
        <taxon>Chordata</taxon>
        <taxon>Craniata</taxon>
        <taxon>Vertebrata</taxon>
        <taxon>Euteleostomi</taxon>
        <taxon>Mammalia</taxon>
        <taxon>Eutheria</taxon>
        <taxon>Euarchontoglires</taxon>
        <taxon>Primates</taxon>
        <taxon>Haplorrhini</taxon>
        <taxon>Catarrhini</taxon>
        <taxon>Hominidae</taxon>
        <taxon>Homo</taxon>
    </lineage>
</organism>
<evidence type="ECO:0000250" key="1"/>
<evidence type="ECO:0000269" key="2">
    <source>
    </source>
</evidence>
<evidence type="ECO:0000269" key="3">
    <source>
    </source>
</evidence>
<evidence type="ECO:0000305" key="4"/>
<gene>
    <name type="primary">TKTL2</name>
</gene>
<accession>Q9H0I9</accession>
<accession>A4FVB4</accession>
<accession>Q8NCT0</accession>
<accession>Q96M82</accession>
<name>TKTL2_HUMAN</name>
<proteinExistence type="evidence at protein level"/>
<comment type="function">
    <text evidence="3">Plays an essential role in total transketolase activity and cell proliferation in cancer cells; after transfection with anti-TKTL1 siRNA, total transketolase activity dramatically decreases and proliferation was significantly inhibited in cancer cells. Plays a pivotal role in carcinogenesis.</text>
</comment>
<comment type="catalytic activity">
    <reaction>
        <text>D-sedoheptulose 7-phosphate + D-glyceraldehyde 3-phosphate = aldehydo-D-ribose 5-phosphate + D-xylulose 5-phosphate</text>
        <dbReference type="Rhea" id="RHEA:10508"/>
        <dbReference type="ChEBI" id="CHEBI:57483"/>
        <dbReference type="ChEBI" id="CHEBI:57737"/>
        <dbReference type="ChEBI" id="CHEBI:58273"/>
        <dbReference type="ChEBI" id="CHEBI:59776"/>
        <dbReference type="EC" id="2.2.1.1"/>
    </reaction>
</comment>
<comment type="cofactor">
    <cofactor evidence="1">
        <name>Mg(2+)</name>
        <dbReference type="ChEBI" id="CHEBI:18420"/>
    </cofactor>
    <cofactor evidence="1">
        <name>Ca(2+)</name>
        <dbReference type="ChEBI" id="CHEBI:29108"/>
    </cofactor>
    <cofactor evidence="1">
        <name>Mn(2+)</name>
        <dbReference type="ChEBI" id="CHEBI:29035"/>
    </cofactor>
    <cofactor evidence="1">
        <name>Co(2+)</name>
        <dbReference type="ChEBI" id="CHEBI:48828"/>
    </cofactor>
    <text evidence="1">Binds 1 Mg(2+) ion per subunit. Can also utilize other divalent metal cations, such as Ca(2+), Mn(2+) and Co(2+).</text>
</comment>
<comment type="cofactor">
    <cofactor evidence="1">
        <name>thiamine diphosphate</name>
        <dbReference type="ChEBI" id="CHEBI:58937"/>
    </cofactor>
    <text evidence="1">Binds 1 thiamine pyrophosphate per subunit.</text>
</comment>
<comment type="subunit">
    <text evidence="1">Homodimer.</text>
</comment>
<comment type="tissue specificity">
    <text evidence="3">Overexpressed in hepatoma cancer cells.</text>
</comment>
<comment type="similarity">
    <text evidence="4">Belongs to the transketolase family.</text>
</comment>